<reference key="1">
    <citation type="journal article" date="2009" name="Nature">
        <title>Evolution of pathogenicity and sexual reproduction in eight Candida genomes.</title>
        <authorList>
            <person name="Butler G."/>
            <person name="Rasmussen M.D."/>
            <person name="Lin M.F."/>
            <person name="Santos M.A.S."/>
            <person name="Sakthikumar S."/>
            <person name="Munro C.A."/>
            <person name="Rheinbay E."/>
            <person name="Grabherr M."/>
            <person name="Forche A."/>
            <person name="Reedy J.L."/>
            <person name="Agrafioti I."/>
            <person name="Arnaud M.B."/>
            <person name="Bates S."/>
            <person name="Brown A.J.P."/>
            <person name="Brunke S."/>
            <person name="Costanzo M.C."/>
            <person name="Fitzpatrick D.A."/>
            <person name="de Groot P.W.J."/>
            <person name="Harris D."/>
            <person name="Hoyer L.L."/>
            <person name="Hube B."/>
            <person name="Klis F.M."/>
            <person name="Kodira C."/>
            <person name="Lennard N."/>
            <person name="Logue M.E."/>
            <person name="Martin R."/>
            <person name="Neiman A.M."/>
            <person name="Nikolaou E."/>
            <person name="Quail M.A."/>
            <person name="Quinn J."/>
            <person name="Santos M.C."/>
            <person name="Schmitzberger F.F."/>
            <person name="Sherlock G."/>
            <person name="Shah P."/>
            <person name="Silverstein K.A.T."/>
            <person name="Skrzypek M.S."/>
            <person name="Soll D."/>
            <person name="Staggs R."/>
            <person name="Stansfield I."/>
            <person name="Stumpf M.P.H."/>
            <person name="Sudbery P.E."/>
            <person name="Srikantha T."/>
            <person name="Zeng Q."/>
            <person name="Berman J."/>
            <person name="Berriman M."/>
            <person name="Heitman J."/>
            <person name="Gow N.A.R."/>
            <person name="Lorenz M.C."/>
            <person name="Birren B.W."/>
            <person name="Kellis M."/>
            <person name="Cuomo C.A."/>
        </authorList>
    </citation>
    <scope>NUCLEOTIDE SEQUENCE [LARGE SCALE GENOMIC DNA]</scope>
    <source>
        <strain>ATCC 11503 / BCRC 21390 / CBS 2605 / JCM 1781 / NBRC 1676 / NRRL YB-4239</strain>
    </source>
</reference>
<protein>
    <recommendedName>
        <fullName evidence="1">Clustered mitochondria protein homolog</fullName>
    </recommendedName>
    <alternativeName>
        <fullName evidence="1">Protein TIF31 homolog</fullName>
    </alternativeName>
</protein>
<gene>
    <name evidence="1" type="primary">CLU1</name>
    <name evidence="1" type="synonym">TIF31</name>
    <name type="ORF">LELG_01780</name>
</gene>
<feature type="chain" id="PRO_0000366406" description="Clustered mitochondria protein homolog">
    <location>
        <begin position="1"/>
        <end position="1397"/>
    </location>
</feature>
<feature type="repeat" description="TPR 1">
    <location>
        <begin position="30"/>
        <end position="63"/>
    </location>
</feature>
<feature type="domain" description="Clu" evidence="2">
    <location>
        <begin position="368"/>
        <end position="640"/>
    </location>
</feature>
<feature type="repeat" description="TPR 2">
    <location>
        <begin position="559"/>
        <end position="595"/>
    </location>
</feature>
<feature type="repeat" description="TPR 3">
    <location>
        <begin position="1167"/>
        <end position="1200"/>
    </location>
</feature>
<feature type="repeat" description="TPR 4">
    <location>
        <begin position="1209"/>
        <end position="1242"/>
    </location>
</feature>
<feature type="region of interest" description="Disordered" evidence="3">
    <location>
        <begin position="158"/>
        <end position="203"/>
    </location>
</feature>
<feature type="region of interest" description="Disordered" evidence="3">
    <location>
        <begin position="526"/>
        <end position="555"/>
    </location>
</feature>
<feature type="region of interest" description="Disordered" evidence="3">
    <location>
        <begin position="686"/>
        <end position="707"/>
    </location>
</feature>
<feature type="region of interest" description="Disordered" evidence="3">
    <location>
        <begin position="812"/>
        <end position="869"/>
    </location>
</feature>
<feature type="region of interest" description="Disordered" evidence="3">
    <location>
        <begin position="1019"/>
        <end position="1050"/>
    </location>
</feature>
<feature type="region of interest" description="Disordered" evidence="3">
    <location>
        <begin position="1314"/>
        <end position="1397"/>
    </location>
</feature>
<feature type="compositionally biased region" description="Basic and acidic residues" evidence="3">
    <location>
        <begin position="161"/>
        <end position="203"/>
    </location>
</feature>
<feature type="compositionally biased region" description="Basic and acidic residues" evidence="3">
    <location>
        <begin position="686"/>
        <end position="703"/>
    </location>
</feature>
<feature type="compositionally biased region" description="Basic and acidic residues" evidence="3">
    <location>
        <begin position="812"/>
        <end position="831"/>
    </location>
</feature>
<feature type="compositionally biased region" description="Basic and acidic residues" evidence="3">
    <location>
        <begin position="839"/>
        <end position="860"/>
    </location>
</feature>
<feature type="compositionally biased region" description="Basic and acidic residues" evidence="3">
    <location>
        <begin position="1019"/>
        <end position="1033"/>
    </location>
</feature>
<feature type="compositionally biased region" description="Basic residues" evidence="3">
    <location>
        <begin position="1034"/>
        <end position="1043"/>
    </location>
</feature>
<feature type="compositionally biased region" description="Polar residues" evidence="3">
    <location>
        <begin position="1314"/>
        <end position="1338"/>
    </location>
</feature>
<feature type="compositionally biased region" description="Polar residues" evidence="3">
    <location>
        <begin position="1362"/>
        <end position="1373"/>
    </location>
</feature>
<feature type="compositionally biased region" description="Basic and acidic residues" evidence="3">
    <location>
        <begin position="1375"/>
        <end position="1384"/>
    </location>
</feature>
<feature type="compositionally biased region" description="Basic residues" evidence="3">
    <location>
        <begin position="1386"/>
        <end position="1397"/>
    </location>
</feature>
<sequence length="1397" mass="156684">MSNGDVVVDADQQQAQAVVAPQQLELQIKLPSFIDQKGDLKIPSHYEETITDLKLTLTVIPKTRSLTNYLILIQGEHDVEQFGEIVTFGQIIEELALGEPECLQIQIREKPYNLAAVYEQIIRLREIVGLHYVDKVSQELGSCGGVTRFNSIKLDPVTARGEAEKSDTNEEEQEQGKGKVGKPNEKESGETKETDSQPELSREELLQLSDLVKEIEESPESINFTQATKFDNINGKVKIPLKSFAVSQWSPVPSFQKTKGDLLYLTVQTLENETFHITSHFTGFFVNKCSATTFNPALKTNEKGRYHKHYLLYELLAQLSPSFTKTIEDNEVKLSESTEHPETYLLPNNSFLAFPWVVNASDLKNIPDSSRSQLMLISNGVDGSEIIKEWNNDIQAMKELPSTNFQERLMRDKLIQKTLFDFSKTATETAINIIKGNIAPMNPGEEPDKLIYLKNGVFYSAGTSTVDVFDKTGGEEASRYVSSKDLAAIKIVNRHELKGISTLVTCIVDYMGKRIVCQAPVPGILDAAPPSEEEDDAGAEQEKKEEGKAEEDEEEEIMEKVLYGLSSDSQKILEDKSFEKPLKLLSEVFHLKPHGVKLSEQVKSEGDLVVSKDTKGLKGTDGRKYAIDLYRTTPRDIEFIEAHFKEGENDSYPHGEALIRHEAVNEWWKRKVSALFAAETEKLEKEGKLEKDGSKGTNSEEKSQIALPIDQVSFNPDAFSSDFESKEDRDEVREISKFIKEKLIPEFIEECQHQLAPFDGQQLSEQLHRYGINLRYLGYIAEQVLVKKAEYEESVEKTIKENEELVKVREAEKVEKDRREAEEAEKAKERAAAQPESSSDDKNQETIENSDAKSKENTESDDKDAEEQPVSKATYELVLANYDSLYRLAIQEMVARASKHVLRQIMKETPLELSAKAVAHFHNCLLGGEINTSPEAEIDPLEASFFSQSAISFAKLTHKDVVAQVAKEVGSRFRFTLEENWIEKLVHLPQLFREIALKFGIQWKSFDYTFTKQEFEHSQREQKQESVVDNVEKKHSKKSKKKSPALPIENKPTSFARSSIFIADDIVGFVPLVKDSSYKPTLVDEIFANARSQLLSGDKDLGMAMLAELVTIYEAIYGKVNSQTAKFYSLVAKVYQELGFDKEAAIMGRKAVVLSERSCGFDNHDTIAAYMNSAYFELANSQIANSLKLYLRAMQLWTSTYGKDHPALVNLLTNVADSLYYAKDYESALKLFNAALEACSHLNGQASEIAGLFHFKIANVLVSQQKIEKSKDSFVAANEIFQKLLGPDDSMTDQTSKYISNVAMYIEYLKARQAQSKKSPPPTQTVAPNARVSASQASAKVANGNGTGSSKSKKGKKDKSTPQSDPQIANQSVEDILKFIEGKSKPNAKSKSKHTKA</sequence>
<evidence type="ECO:0000255" key="1">
    <source>
        <dbReference type="HAMAP-Rule" id="MF_03013"/>
    </source>
</evidence>
<evidence type="ECO:0000255" key="2">
    <source>
        <dbReference type="PROSITE-ProRule" id="PRU01167"/>
    </source>
</evidence>
<evidence type="ECO:0000256" key="3">
    <source>
        <dbReference type="SAM" id="MobiDB-lite"/>
    </source>
</evidence>
<organism>
    <name type="scientific">Lodderomyces elongisporus (strain ATCC 11503 / CBS 2605 / JCM 1781 / NBRC 1676 / NRRL YB-4239)</name>
    <name type="common">Yeast</name>
    <name type="synonym">Saccharomyces elongisporus</name>
    <dbReference type="NCBI Taxonomy" id="379508"/>
    <lineage>
        <taxon>Eukaryota</taxon>
        <taxon>Fungi</taxon>
        <taxon>Dikarya</taxon>
        <taxon>Ascomycota</taxon>
        <taxon>Saccharomycotina</taxon>
        <taxon>Pichiomycetes</taxon>
        <taxon>Debaryomycetaceae</taxon>
        <taxon>Candida/Lodderomyces clade</taxon>
        <taxon>Lodderomyces</taxon>
    </lineage>
</organism>
<comment type="function">
    <text evidence="1">mRNA-binding protein involved in proper cytoplasmic distribution of mitochondria.</text>
</comment>
<comment type="subunit">
    <text evidence="1">May associate with the eukaryotic translation initiation factor 3 (eIF-3) complex.</text>
</comment>
<comment type="subcellular location">
    <subcellularLocation>
        <location evidence="1">Cytoplasm</location>
    </subcellularLocation>
</comment>
<comment type="similarity">
    <text evidence="1">Belongs to the CLU family.</text>
</comment>
<proteinExistence type="inferred from homology"/>
<accession>A5DWP3</accession>
<name>CLU_LODEL</name>
<keyword id="KW-0963">Cytoplasm</keyword>
<keyword id="KW-1185">Reference proteome</keyword>
<keyword id="KW-0677">Repeat</keyword>
<keyword id="KW-0802">TPR repeat</keyword>
<dbReference type="EMBL" id="CH981525">
    <property type="protein sequence ID" value="EDK43601.1"/>
    <property type="molecule type" value="Genomic_DNA"/>
</dbReference>
<dbReference type="RefSeq" id="XP_001526951.1">
    <property type="nucleotide sequence ID" value="XM_001526901.1"/>
</dbReference>
<dbReference type="SMR" id="A5DWP3"/>
<dbReference type="FunCoup" id="A5DWP3">
    <property type="interactions" value="969"/>
</dbReference>
<dbReference type="STRING" id="379508.A5DWP3"/>
<dbReference type="GeneID" id="5234473"/>
<dbReference type="KEGG" id="lel:PVL30_001756"/>
<dbReference type="VEuPathDB" id="FungiDB:LELG_01780"/>
<dbReference type="eggNOG" id="KOG1839">
    <property type="taxonomic scope" value="Eukaryota"/>
</dbReference>
<dbReference type="HOGENOM" id="CLU_003256_2_0_1"/>
<dbReference type="InParanoid" id="A5DWP3"/>
<dbReference type="OMA" id="HPVWDKD"/>
<dbReference type="OrthoDB" id="1414216at2759"/>
<dbReference type="Proteomes" id="UP000001996">
    <property type="component" value="Unassembled WGS sequence"/>
</dbReference>
<dbReference type="GO" id="GO:0005737">
    <property type="term" value="C:cytoplasm"/>
    <property type="evidence" value="ECO:0007669"/>
    <property type="project" value="UniProtKB-SubCell"/>
</dbReference>
<dbReference type="GO" id="GO:0003729">
    <property type="term" value="F:mRNA binding"/>
    <property type="evidence" value="ECO:0007669"/>
    <property type="project" value="TreeGrafter"/>
</dbReference>
<dbReference type="GO" id="GO:0048312">
    <property type="term" value="P:intracellular distribution of mitochondria"/>
    <property type="evidence" value="ECO:0007669"/>
    <property type="project" value="TreeGrafter"/>
</dbReference>
<dbReference type="GO" id="GO:0007005">
    <property type="term" value="P:mitochondrion organization"/>
    <property type="evidence" value="ECO:0007669"/>
    <property type="project" value="UniProtKB-UniRule"/>
</dbReference>
<dbReference type="CDD" id="cd15466">
    <property type="entry name" value="CLU-central"/>
    <property type="match status" value="1"/>
</dbReference>
<dbReference type="Gene3D" id="3.30.2280.10">
    <property type="entry name" value="Hypothetical protein (hspc210)"/>
    <property type="match status" value="1"/>
</dbReference>
<dbReference type="Gene3D" id="1.25.40.10">
    <property type="entry name" value="Tetratricopeptide repeat domain"/>
    <property type="match status" value="2"/>
</dbReference>
<dbReference type="HAMAP" id="MF_03013">
    <property type="entry name" value="CLU"/>
    <property type="match status" value="1"/>
</dbReference>
<dbReference type="InterPro" id="IPR033646">
    <property type="entry name" value="CLU-central"/>
</dbReference>
<dbReference type="InterPro" id="IPR025697">
    <property type="entry name" value="CLU_dom"/>
</dbReference>
<dbReference type="InterPro" id="IPR028275">
    <property type="entry name" value="CLU_N"/>
</dbReference>
<dbReference type="InterPro" id="IPR027523">
    <property type="entry name" value="CLU_prot"/>
</dbReference>
<dbReference type="InterPro" id="IPR023231">
    <property type="entry name" value="GSKIP_dom_sf"/>
</dbReference>
<dbReference type="InterPro" id="IPR011990">
    <property type="entry name" value="TPR-like_helical_dom_sf"/>
</dbReference>
<dbReference type="PANTHER" id="PTHR12601:SF6">
    <property type="entry name" value="CLUSTERED MITOCHONDRIA PROTEIN HOMOLOG"/>
    <property type="match status" value="1"/>
</dbReference>
<dbReference type="PANTHER" id="PTHR12601">
    <property type="entry name" value="EUKARYOTIC TRANSLATION INITIATION FACTOR 3 SUBUNIT EIF-3"/>
    <property type="match status" value="1"/>
</dbReference>
<dbReference type="Pfam" id="PF13236">
    <property type="entry name" value="CLU"/>
    <property type="match status" value="1"/>
</dbReference>
<dbReference type="Pfam" id="PF15044">
    <property type="entry name" value="CLU_N"/>
    <property type="match status" value="1"/>
</dbReference>
<dbReference type="Pfam" id="PF12807">
    <property type="entry name" value="eIF3_p135"/>
    <property type="match status" value="1"/>
</dbReference>
<dbReference type="Pfam" id="PF13424">
    <property type="entry name" value="TPR_12"/>
    <property type="match status" value="1"/>
</dbReference>
<dbReference type="SUPFAM" id="SSF103107">
    <property type="entry name" value="Hypothetical protein c14orf129, hspc210"/>
    <property type="match status" value="1"/>
</dbReference>
<dbReference type="SUPFAM" id="SSF48452">
    <property type="entry name" value="TPR-like"/>
    <property type="match status" value="2"/>
</dbReference>
<dbReference type="PROSITE" id="PS51823">
    <property type="entry name" value="CLU"/>
    <property type="match status" value="1"/>
</dbReference>